<accession>A4GCI3</accession>
<name>RDRP_I83A1</name>
<proteinExistence type="inferred from homology"/>
<feature type="chain" id="PRO_0000373057" description="RNA-directed RNA polymerase catalytic subunit">
    <location>
        <begin position="1"/>
        <end position="757"/>
    </location>
</feature>
<feature type="domain" description="RdRp catalytic" evidence="2">
    <location>
        <begin position="286"/>
        <end position="483"/>
    </location>
</feature>
<feature type="region of interest" description="Disordered" evidence="3">
    <location>
        <begin position="53"/>
        <end position="82"/>
    </location>
</feature>
<feature type="region of interest" description="Promoter-binding site" evidence="2">
    <location>
        <begin position="249"/>
        <end position="256"/>
    </location>
</feature>
<feature type="short sequence motif" description="Nuclear localization signal" evidence="2">
    <location>
        <begin position="187"/>
        <end position="195"/>
    </location>
</feature>
<feature type="short sequence motif" description="Nuclear localization signal" evidence="2">
    <location>
        <begin position="203"/>
        <end position="216"/>
    </location>
</feature>
<gene>
    <name evidence="2" type="primary">PB1</name>
</gene>
<evidence type="ECO:0000250" key="1">
    <source>
        <dbReference type="UniProtKB" id="P03431"/>
    </source>
</evidence>
<evidence type="ECO:0000255" key="2">
    <source>
        <dbReference type="HAMAP-Rule" id="MF_04065"/>
    </source>
</evidence>
<evidence type="ECO:0000256" key="3">
    <source>
        <dbReference type="SAM" id="MobiDB-lite"/>
    </source>
</evidence>
<sequence length="757" mass="86672">MDVNPTLLFLKVPAQNAISTTFPYTGDPPYSHGTGTGYTMDTVNRTHQYSERGRWTKNTETGAPQLNPIDGPLPKDNEPSGYAQTDCVLEAMAFLEESHPGIFENSCIETMEVVQQTRVDKLTQGRQTYDWTLNRNQPAATALANTIEVFRSNGLMANESGRLIDFLKDVMDSMDREEMEITTHFQRKRRVRDNVTKKMVTQRTIGKKKHRLNKRSYLIRALTLNTMTKDAERGKLKRRAIATPGMQIRGFVYFVETLARSICEKLEQSGLPVGGNEKKAKLANVVRKMMTNSQDTEISFTITGDNTKWNENQNPRMFLAMITYITRNQPEWFRNILSIAPIMFSNKMARLGKGYMFESKSMKLRTQIPAEMLANIDLRYFNDSTRKKIEKIRPLLIDGTASLSPGMMMGMFNMLSTVLGVSILNLGQKRYTKTTYWWDGLQSSDDFALIVNAPNYAGIQAGVDRFYRTCKLLGINMSKKKSYINRTGTFEFTSFFYRYGFVANFSMELPSFGVSGINESADMSIGVTVIKNNMINNDLGPATAQMALQLFIKDYRYTYRCHRGDTQIQTRRSFEIKKLWDQTRSKTGLLVSDGGPNLYNIRNLHIPEVCLKWDLMDEDYQGRLCNPLNPFVSHKEIESVNNAVMMPAHGPAKIMEYDAVATTHSWVPKRNRSILNTSQRGILEDEQMYQRCCNLFEKFFPSSSYRRPVGISSMVEAMISRARIDARIDFESGRIKKEEFTEIMKTCSTIEELRRQK</sequence>
<organismHost>
    <name type="scientific">Aves</name>
    <dbReference type="NCBI Taxonomy" id="8782"/>
</organismHost>
<organismHost>
    <name type="scientific">Homo sapiens</name>
    <name type="common">Human</name>
    <dbReference type="NCBI Taxonomy" id="9606"/>
</organismHost>
<organismHost>
    <name type="scientific">Sus scrofa</name>
    <name type="common">Pig</name>
    <dbReference type="NCBI Taxonomy" id="9823"/>
</organismHost>
<protein>
    <recommendedName>
        <fullName evidence="2">RNA-directed RNA polymerase catalytic subunit</fullName>
        <ecNumber evidence="2">2.7.7.48</ecNumber>
    </recommendedName>
    <alternativeName>
        <fullName evidence="2">Polymerase basic protein 1</fullName>
        <shortName evidence="2">PB1</shortName>
    </alternativeName>
    <alternativeName>
        <fullName evidence="2">RNA-directed RNA polymerase subunit P1</fullName>
    </alternativeName>
</protein>
<reference key="1">
    <citation type="submission" date="2007-03" db="EMBL/GenBank/DDBJ databases">
        <title>The NIAID influenza genome sequencing project.</title>
        <authorList>
            <person name="Ghedin E."/>
            <person name="Spiro D."/>
            <person name="Miller N."/>
            <person name="Zaborsky J."/>
            <person name="Feldblyum T."/>
            <person name="Subbu V."/>
            <person name="Shumway M."/>
            <person name="Sparenborg J."/>
            <person name="Groveman L."/>
            <person name="Halpin R."/>
            <person name="Sitz J."/>
            <person name="Koo H."/>
            <person name="Salzberg S.L."/>
            <person name="Webster R.G."/>
            <person name="Hoffmann E."/>
            <person name="Krauss S."/>
            <person name="Naeve C."/>
            <person name="Bao Y."/>
            <person name="Bolotov P."/>
            <person name="Dernovoy D."/>
            <person name="Kiryutin B."/>
            <person name="Lipman D.J."/>
            <person name="Tatusova T."/>
        </authorList>
    </citation>
    <scope>NUCLEOTIDE SEQUENCE [GENOMIC RNA]</scope>
</reference>
<reference key="2">
    <citation type="submission" date="2007-03" db="EMBL/GenBank/DDBJ databases">
        <authorList>
            <consortium name="The NIAID Influenza Genome Sequencing Consortium"/>
        </authorList>
    </citation>
    <scope>NUCLEOTIDE SEQUENCE [GENOMIC RNA]</scope>
</reference>
<comment type="function">
    <text evidence="2">RNA-dependent RNA polymerase which is responsible for replication and transcription of virus RNA segments. The transcription of viral mRNAs occurs by a unique mechanism called cap-snatching. 5' methylated caps of cellular mRNAs are cleaved after 10-13 nucleotides by PA. In turn, these short capped RNAs are used as primers by PB1 for transcription of viral mRNAs. During virus replication, PB1 initiates RNA synthesis and copy vRNA into complementary RNA (cRNA) which in turn serves as a template for the production of more vRNAs.</text>
</comment>
<comment type="catalytic activity">
    <reaction evidence="2">
        <text>RNA(n) + a ribonucleoside 5'-triphosphate = RNA(n+1) + diphosphate</text>
        <dbReference type="Rhea" id="RHEA:21248"/>
        <dbReference type="Rhea" id="RHEA-COMP:14527"/>
        <dbReference type="Rhea" id="RHEA-COMP:17342"/>
        <dbReference type="ChEBI" id="CHEBI:33019"/>
        <dbReference type="ChEBI" id="CHEBI:61557"/>
        <dbReference type="ChEBI" id="CHEBI:140395"/>
        <dbReference type="EC" id="2.7.7.48"/>
    </reaction>
</comment>
<comment type="subunit">
    <text evidence="1 2">Influenza RNA polymerase is composed of three subunits: PB1, PB2 and PA. Interacts (via N-terminus) with PA (via C-terminus). Interacts (via C-terminus) with PB2 (via N-terminus); this interaction is essential for transcription initiation. Interacts (via C-terminus) with human PKP2 (via N-terminus); the interaction competitively inhibits the interaction between the RNA polymerase subunits PB1 and PB2 (By similarity).</text>
</comment>
<comment type="subcellular location">
    <subcellularLocation>
        <location evidence="2">Host nucleus</location>
    </subcellularLocation>
    <subcellularLocation>
        <location evidence="2">Host cytoplasm</location>
    </subcellularLocation>
</comment>
<comment type="PTM">
    <text evidence="2">Phosphorylated by host PRKCA.</text>
</comment>
<comment type="similarity">
    <text evidence="2">Belongs to the influenza viruses polymerase PB1 family.</text>
</comment>
<organism>
    <name type="scientific">Influenza A virus (strain A/Chile/1/1983 H1N1)</name>
    <dbReference type="NCBI Taxonomy" id="380985"/>
    <lineage>
        <taxon>Viruses</taxon>
        <taxon>Riboviria</taxon>
        <taxon>Orthornavirae</taxon>
        <taxon>Negarnaviricota</taxon>
        <taxon>Polyploviricotina</taxon>
        <taxon>Insthoviricetes</taxon>
        <taxon>Articulavirales</taxon>
        <taxon>Orthomyxoviridae</taxon>
        <taxon>Alphainfluenzavirus</taxon>
        <taxon>Alphainfluenzavirus influenzae</taxon>
        <taxon>Influenza A virus</taxon>
    </lineage>
</organism>
<keyword id="KW-1262">Eukaryotic host gene expression shutoff by virus</keyword>
<keyword id="KW-1191">Eukaryotic host transcription shutoff by virus</keyword>
<keyword id="KW-1035">Host cytoplasm</keyword>
<keyword id="KW-1190">Host gene expression shutoff by virus</keyword>
<keyword id="KW-1048">Host nucleus</keyword>
<keyword id="KW-0945">Host-virus interaction</keyword>
<keyword id="KW-1104">Inhibition of host RNA polymerase II by virus</keyword>
<keyword id="KW-0547">Nucleotide-binding</keyword>
<keyword id="KW-0548">Nucleotidyltransferase</keyword>
<keyword id="KW-0597">Phosphoprotein</keyword>
<keyword id="KW-0696">RNA-directed RNA polymerase</keyword>
<keyword id="KW-0808">Transferase</keyword>
<keyword id="KW-0693">Viral RNA replication</keyword>
<keyword id="KW-1195">Viral transcription</keyword>
<dbReference type="EC" id="2.7.7.48" evidence="2"/>
<dbReference type="EMBL" id="CY020443">
    <property type="protein sequence ID" value="ABO38348.1"/>
    <property type="molecule type" value="Viral_cRNA"/>
</dbReference>
<dbReference type="SMR" id="A4GCI3"/>
<dbReference type="Proteomes" id="UP000008582">
    <property type="component" value="Genome"/>
</dbReference>
<dbReference type="GO" id="GO:0030430">
    <property type="term" value="C:host cell cytoplasm"/>
    <property type="evidence" value="ECO:0007669"/>
    <property type="project" value="UniProtKB-SubCell"/>
</dbReference>
<dbReference type="GO" id="GO:0042025">
    <property type="term" value="C:host cell nucleus"/>
    <property type="evidence" value="ECO:0007669"/>
    <property type="project" value="UniProtKB-SubCell"/>
</dbReference>
<dbReference type="GO" id="GO:0000166">
    <property type="term" value="F:nucleotide binding"/>
    <property type="evidence" value="ECO:0007669"/>
    <property type="project" value="UniProtKB-UniRule"/>
</dbReference>
<dbReference type="GO" id="GO:0003723">
    <property type="term" value="F:RNA binding"/>
    <property type="evidence" value="ECO:0007669"/>
    <property type="project" value="InterPro"/>
</dbReference>
<dbReference type="GO" id="GO:0003968">
    <property type="term" value="F:RNA-directed RNA polymerase activity"/>
    <property type="evidence" value="ECO:0007669"/>
    <property type="project" value="UniProtKB-UniRule"/>
</dbReference>
<dbReference type="GO" id="GO:0006351">
    <property type="term" value="P:DNA-templated transcription"/>
    <property type="evidence" value="ECO:0007669"/>
    <property type="project" value="UniProtKB-UniRule"/>
</dbReference>
<dbReference type="GO" id="GO:0039657">
    <property type="term" value="P:symbiont-mediated suppression of host gene expression"/>
    <property type="evidence" value="ECO:0007669"/>
    <property type="project" value="UniProtKB-KW"/>
</dbReference>
<dbReference type="GO" id="GO:0039523">
    <property type="term" value="P:symbiont-mediated suppression of host mRNA transcription via inhibition of RNA polymerase II activity"/>
    <property type="evidence" value="ECO:0007669"/>
    <property type="project" value="UniProtKB-UniRule"/>
</dbReference>
<dbReference type="GO" id="GO:0039694">
    <property type="term" value="P:viral RNA genome replication"/>
    <property type="evidence" value="ECO:0007669"/>
    <property type="project" value="UniProtKB-UniRule"/>
</dbReference>
<dbReference type="GO" id="GO:0019083">
    <property type="term" value="P:viral transcription"/>
    <property type="evidence" value="ECO:0007669"/>
    <property type="project" value="UniProtKB-KW"/>
</dbReference>
<dbReference type="Gene3D" id="6.10.140.720">
    <property type="match status" value="1"/>
</dbReference>
<dbReference type="HAMAP" id="MF_04065">
    <property type="entry name" value="INFV_RDRP"/>
    <property type="match status" value="1"/>
</dbReference>
<dbReference type="InterPro" id="IPR007099">
    <property type="entry name" value="RNA-dir_pol_NSvirus"/>
</dbReference>
<dbReference type="InterPro" id="IPR001407">
    <property type="entry name" value="RNA_pol_PB1_influenza"/>
</dbReference>
<dbReference type="Pfam" id="PF00602">
    <property type="entry name" value="Flu_PB1"/>
    <property type="match status" value="1"/>
</dbReference>
<dbReference type="PIRSF" id="PIRSF000827">
    <property type="entry name" value="RdRPol_OMV"/>
    <property type="match status" value="1"/>
</dbReference>
<dbReference type="PROSITE" id="PS50525">
    <property type="entry name" value="RDRP_SSRNA_NEG_SEG"/>
    <property type="match status" value="1"/>
</dbReference>